<sequence>MALYELFSHPVERSYRAGLCSKAALFLLLAAALTYIPPLLVAFRSHGFWLKRSSYEEQPTVRFQHQVLLVALLGPESDGFLAWSTFPAFNRLQGDRLRVPLVSTREEDRNQDGKTDMLHFKLELPLQSTEHVLGVQLILTFSYRLHRMATLVMQSMAFLQSSFPVPGSQLYVNGDLRLQQKQPLSCGGLDARYNISVINGTSPFAYDYDLTHIVAAYQERNVTTVLNDPNPIWLVGRAADAPFVINAIIRYPVEVISYQPGFWEMVKFAWVQYVSILLIFLWVFERIKIFVFQNQVVTTIPVTVTPRGDLCKEHLS</sequence>
<comment type="function">
    <text evidence="1">Transmembrane component of the tectonic-like complex, a complex localized at the transition zone of primary cilia and acting as a barrier that prevents diffusion of transmembrane proteins between the cilia and plasma membranes. Required for ciliogenesis and sonic hedgehog/SHH signaling (By similarity).</text>
</comment>
<comment type="subunit">
    <text evidence="8">Part of the tectonic-like complex (also named B9 complex). Interacts with TMEM107.</text>
</comment>
<comment type="interaction">
    <interactant intactId="EBI-10307654">
        <id>Q9H6L2</id>
    </interactant>
    <interactant intactId="EBI-948001">
        <id>Q15323</id>
        <label>KRT31</label>
    </interactant>
    <organismsDiffer>false</organismsDiffer>
    <experiments>3</experiments>
</comment>
<comment type="interaction">
    <interactant intactId="EBI-10307654">
        <id>Q9H6L2</id>
    </interactant>
    <interactant intactId="EBI-10171697">
        <id>Q6A162</id>
        <label>KRT40</label>
    </interactant>
    <organismsDiffer>false</organismsDiffer>
    <experiments>3</experiments>
</comment>
<comment type="interaction">
    <interactant intactId="EBI-10307654">
        <id>Q9H6L2</id>
    </interactant>
    <interactant intactId="EBI-945833">
        <id>Q7Z3S9</id>
        <label>NOTCH2NLA</label>
    </interactant>
    <organismsDiffer>false</organismsDiffer>
    <experiments>3</experiments>
</comment>
<comment type="subcellular location">
    <subcellularLocation>
        <location evidence="1">Cell projection</location>
        <location evidence="1">Cilium membrane</location>
        <topology evidence="1">Multi-pass membrane protein</topology>
    </subcellularLocation>
    <text evidence="1">Localizes to the transition zone of primary cilia; SEPT2 is required for localization to the transition zone.</text>
</comment>
<comment type="alternative products">
    <event type="alternative splicing"/>
    <isoform>
        <id>Q9H6L2-1</id>
        <name>1</name>
        <sequence type="displayed"/>
    </isoform>
    <isoform>
        <id>Q9H6L2-2</id>
        <name>2</name>
        <sequence type="described" ref="VSP_042388"/>
    </isoform>
    <isoform>
        <id>Q9H6L2-3</id>
        <name>3</name>
        <sequence type="described" ref="VSP_042387"/>
    </isoform>
</comment>
<comment type="disease" evidence="5 7">
    <disease id="DI-03599">
        <name>Joubert syndrome 20</name>
        <acronym>JBTS20</acronym>
        <description>A disorder presenting with cerebellar ataxia, oculomotor apraxia, hypotonia, neonatal breathing abnormalities and psychomotor delay. Neuroradiologically, it is characterized by cerebellar vermian hypoplasia/aplasia, thickened and reoriented superior cerebellar peduncles, and an abnormally large interpeduncular fossa, giving the appearance of a molar tooth on transaxial slices (molar tooth sign). Additional variable features include retinal dystrophy and renal disease.</description>
        <dbReference type="MIM" id="614970"/>
    </disease>
    <text>The disease is caused by variants affecting the gene represented in this entry.</text>
</comment>
<comment type="disease" evidence="6">
    <disease id="DI-03873">
        <name>Meckel syndrome 11</name>
        <acronym>MKS11</acronym>
        <description>A disorder characterized by a combination of renal cysts and variably associated features including developmental anomalies of the central nervous system (typically encephalocele), hepatic ductal dysplasia and cysts, and polydactyly.</description>
        <dbReference type="MIM" id="615397"/>
    </disease>
    <text>The disease is caused by variants affecting the gene represented in this entry.</text>
</comment>
<comment type="similarity">
    <text evidence="11">Belongs to the TMEM231 family.</text>
</comment>
<proteinExistence type="evidence at protein level"/>
<organism>
    <name type="scientific">Homo sapiens</name>
    <name type="common">Human</name>
    <dbReference type="NCBI Taxonomy" id="9606"/>
    <lineage>
        <taxon>Eukaryota</taxon>
        <taxon>Metazoa</taxon>
        <taxon>Chordata</taxon>
        <taxon>Craniata</taxon>
        <taxon>Vertebrata</taxon>
        <taxon>Euteleostomi</taxon>
        <taxon>Mammalia</taxon>
        <taxon>Eutheria</taxon>
        <taxon>Euarchontoglires</taxon>
        <taxon>Primates</taxon>
        <taxon>Haplorrhini</taxon>
        <taxon>Catarrhini</taxon>
        <taxon>Hominidae</taxon>
        <taxon>Homo</taxon>
    </lineage>
</organism>
<accession>Q9H6L2</accession>
<accession>A0JLU1</accession>
<accession>A6NDZ6</accession>
<accession>B3KU85</accession>
<accession>G5E9E3</accession>
<accession>Q6P450</accession>
<accession>Q6UWW5</accession>
<protein>
    <recommendedName>
        <fullName>Transmembrane protein 231</fullName>
    </recommendedName>
</protein>
<dbReference type="EMBL" id="AY358612">
    <property type="protein sequence ID" value="AAQ88975.1"/>
    <property type="molecule type" value="mRNA"/>
</dbReference>
<dbReference type="EMBL" id="AK025820">
    <property type="protein sequence ID" value="BAB15244.1"/>
    <property type="molecule type" value="mRNA"/>
</dbReference>
<dbReference type="EMBL" id="AK096650">
    <property type="protein sequence ID" value="BAG53347.1"/>
    <property type="molecule type" value="mRNA"/>
</dbReference>
<dbReference type="EMBL" id="AK290483">
    <property type="protein sequence ID" value="BAF83172.1"/>
    <property type="molecule type" value="mRNA"/>
</dbReference>
<dbReference type="EMBL" id="AC009163">
    <property type="status" value="NOT_ANNOTATED_CDS"/>
    <property type="molecule type" value="Genomic_DNA"/>
</dbReference>
<dbReference type="EMBL" id="AC025287">
    <property type="status" value="NOT_ANNOTATED_CDS"/>
    <property type="molecule type" value="Genomic_DNA"/>
</dbReference>
<dbReference type="EMBL" id="CH471114">
    <property type="protein sequence ID" value="EAW95632.1"/>
    <property type="molecule type" value="Genomic_DNA"/>
</dbReference>
<dbReference type="EMBL" id="CH471114">
    <property type="protein sequence ID" value="EAW95633.1"/>
    <property type="molecule type" value="Genomic_DNA"/>
</dbReference>
<dbReference type="EMBL" id="BC010609">
    <property type="protein sequence ID" value="AAH10609.1"/>
    <property type="molecule type" value="mRNA"/>
</dbReference>
<dbReference type="EMBL" id="BC016401">
    <property type="protein sequence ID" value="AAH16401.1"/>
    <property type="molecule type" value="mRNA"/>
</dbReference>
<dbReference type="EMBL" id="BC063677">
    <property type="protein sequence ID" value="AAH63677.1"/>
    <property type="molecule type" value="mRNA"/>
</dbReference>
<dbReference type="CCDS" id="CCDS45530.1">
    <molecule id="Q9H6L2-1"/>
</dbReference>
<dbReference type="RefSeq" id="NP_001070884.2">
    <property type="nucleotide sequence ID" value="NM_001077416.2"/>
</dbReference>
<dbReference type="RefSeq" id="NP_001070886.1">
    <molecule id="Q9H6L2-1"/>
    <property type="nucleotide sequence ID" value="NM_001077418.3"/>
</dbReference>
<dbReference type="BioGRID" id="311393">
    <property type="interactions" value="81"/>
</dbReference>
<dbReference type="ComplexPortal" id="CPX-2531">
    <property type="entry name" value="MKS transition zone complex"/>
</dbReference>
<dbReference type="DIP" id="DIP-61994N"/>
<dbReference type="FunCoup" id="Q9H6L2">
    <property type="interactions" value="361"/>
</dbReference>
<dbReference type="IntAct" id="Q9H6L2">
    <property type="interactions" value="54"/>
</dbReference>
<dbReference type="MINT" id="Q9H6L2"/>
<dbReference type="STRING" id="9606.ENSP00000258173"/>
<dbReference type="GlyConnect" id="1852">
    <property type="glycosylation" value="1 N-Linked glycan (1 site)"/>
</dbReference>
<dbReference type="GlyCosmos" id="Q9H6L2">
    <property type="glycosylation" value="3 sites, 1 glycan"/>
</dbReference>
<dbReference type="GlyGen" id="Q9H6L2">
    <property type="glycosylation" value="6 sites, 5 N-linked glycans (1 site), 1 O-linked glycan (2 sites)"/>
</dbReference>
<dbReference type="iPTMnet" id="Q9H6L2"/>
<dbReference type="PhosphoSitePlus" id="Q9H6L2"/>
<dbReference type="SwissPalm" id="Q9H6L2"/>
<dbReference type="BioMuta" id="TMEM231"/>
<dbReference type="DMDM" id="74733611"/>
<dbReference type="jPOST" id="Q9H6L2"/>
<dbReference type="MassIVE" id="Q9H6L2"/>
<dbReference type="PaxDb" id="9606-ENSP00000258173"/>
<dbReference type="PeptideAtlas" id="Q9H6L2"/>
<dbReference type="ProteomicsDB" id="80998">
    <molecule id="Q9H6L2-1"/>
</dbReference>
<dbReference type="ProteomicsDB" id="80999">
    <molecule id="Q9H6L2-2"/>
</dbReference>
<dbReference type="ProteomicsDB" id="81000">
    <molecule id="Q9H6L2-3"/>
</dbReference>
<dbReference type="Pumba" id="Q9H6L2"/>
<dbReference type="Antibodypedia" id="8257">
    <property type="antibodies" value="47 antibodies from 19 providers"/>
</dbReference>
<dbReference type="DNASU" id="79583"/>
<dbReference type="Ensembl" id="ENST00000258173.11">
    <molecule id="Q9H6L2-1"/>
    <property type="protein sequence ID" value="ENSP00000258173.5"/>
    <property type="gene ID" value="ENSG00000205084.12"/>
</dbReference>
<dbReference type="Ensembl" id="ENST00000568377.5">
    <molecule id="Q9H6L2-2"/>
    <property type="protein sequence ID" value="ENSP00000476267.1"/>
    <property type="gene ID" value="ENSG00000205084.12"/>
</dbReference>
<dbReference type="Ensembl" id="ENST00000692689.1">
    <molecule id="Q9H6L2-3"/>
    <property type="protein sequence ID" value="ENSP00000509732.1"/>
    <property type="gene ID" value="ENSG00000205084.12"/>
</dbReference>
<dbReference type="GeneID" id="79583"/>
<dbReference type="KEGG" id="hsa:79583"/>
<dbReference type="MANE-Select" id="ENST00000258173.11">
    <property type="protein sequence ID" value="ENSP00000258173.5"/>
    <property type="RefSeq nucleotide sequence ID" value="NM_001077418.3"/>
    <property type="RefSeq protein sequence ID" value="NP_001070886.1"/>
</dbReference>
<dbReference type="UCSC" id="uc002fem.5">
    <molecule id="Q9H6L2-1"/>
    <property type="organism name" value="human"/>
</dbReference>
<dbReference type="AGR" id="HGNC:37234"/>
<dbReference type="CTD" id="79583"/>
<dbReference type="DisGeNET" id="79583"/>
<dbReference type="GeneCards" id="TMEM231"/>
<dbReference type="GeneReviews" id="TMEM231"/>
<dbReference type="HGNC" id="HGNC:37234">
    <property type="gene designation" value="TMEM231"/>
</dbReference>
<dbReference type="HPA" id="ENSG00000205084">
    <property type="expression patterns" value="Group enriched (choroid plexus, fallopian tube)"/>
</dbReference>
<dbReference type="MalaCards" id="TMEM231"/>
<dbReference type="MIM" id="614949">
    <property type="type" value="gene"/>
</dbReference>
<dbReference type="MIM" id="614970">
    <property type="type" value="phenotype"/>
</dbReference>
<dbReference type="MIM" id="615397">
    <property type="type" value="phenotype"/>
</dbReference>
<dbReference type="neXtProt" id="NX_Q9H6L2"/>
<dbReference type="OpenTargets" id="ENSG00000205084"/>
<dbReference type="Orphanet" id="2318">
    <property type="disease" value="Joubert syndrome with oculorenal defect"/>
</dbReference>
<dbReference type="Orphanet" id="564">
    <property type="disease" value="Meckel syndrome"/>
</dbReference>
<dbReference type="Orphanet" id="2754">
    <property type="disease" value="Orofaciodigital syndrome type 6"/>
</dbReference>
<dbReference type="PharmGKB" id="PA165450754"/>
<dbReference type="VEuPathDB" id="HostDB:ENSG00000205084"/>
<dbReference type="eggNOG" id="KOG4838">
    <property type="taxonomic scope" value="Eukaryota"/>
</dbReference>
<dbReference type="GeneTree" id="ENSGT00390000015366"/>
<dbReference type="InParanoid" id="Q9H6L2"/>
<dbReference type="OMA" id="PALYTRY"/>
<dbReference type="OrthoDB" id="426438at2759"/>
<dbReference type="PAN-GO" id="Q9H6L2">
    <property type="GO annotations" value="4 GO annotations based on evolutionary models"/>
</dbReference>
<dbReference type="PhylomeDB" id="Q9H6L2"/>
<dbReference type="TreeFam" id="TF312969"/>
<dbReference type="PathwayCommons" id="Q9H6L2"/>
<dbReference type="SignaLink" id="Q9H6L2"/>
<dbReference type="BioGRID-ORCS" id="79583">
    <property type="hits" value="10 hits in 1159 CRISPR screens"/>
</dbReference>
<dbReference type="ChiTaRS" id="TMEM231">
    <property type="organism name" value="human"/>
</dbReference>
<dbReference type="GenomeRNAi" id="79583"/>
<dbReference type="Pharos" id="Q9H6L2">
    <property type="development level" value="Tbio"/>
</dbReference>
<dbReference type="PRO" id="PR:Q9H6L2"/>
<dbReference type="Proteomes" id="UP000005640">
    <property type="component" value="Chromosome 16"/>
</dbReference>
<dbReference type="RNAct" id="Q9H6L2">
    <property type="molecule type" value="protein"/>
</dbReference>
<dbReference type="Bgee" id="ENSG00000205084">
    <property type="expression patterns" value="Expressed in bronchial epithelial cell and 174 other cell types or tissues"/>
</dbReference>
<dbReference type="ExpressionAtlas" id="Q9H6L2">
    <property type="expression patterns" value="baseline and differential"/>
</dbReference>
<dbReference type="GO" id="GO:0060170">
    <property type="term" value="C:ciliary membrane"/>
    <property type="evidence" value="ECO:0000250"/>
    <property type="project" value="UniProtKB"/>
</dbReference>
<dbReference type="GO" id="GO:0035869">
    <property type="term" value="C:ciliary transition zone"/>
    <property type="evidence" value="ECO:0000250"/>
    <property type="project" value="UniProtKB"/>
</dbReference>
<dbReference type="GO" id="GO:0036038">
    <property type="term" value="C:MKS complex"/>
    <property type="evidence" value="ECO:0000250"/>
    <property type="project" value="UniProtKB"/>
</dbReference>
<dbReference type="GO" id="GO:0043010">
    <property type="term" value="P:camera-type eye development"/>
    <property type="evidence" value="ECO:0007669"/>
    <property type="project" value="Ensembl"/>
</dbReference>
<dbReference type="GO" id="GO:0060271">
    <property type="term" value="P:cilium assembly"/>
    <property type="evidence" value="ECO:0000250"/>
    <property type="project" value="UniProtKB"/>
</dbReference>
<dbReference type="GO" id="GO:0042733">
    <property type="term" value="P:embryonic digit morphogenesis"/>
    <property type="evidence" value="ECO:0007669"/>
    <property type="project" value="Ensembl"/>
</dbReference>
<dbReference type="GO" id="GO:0001701">
    <property type="term" value="P:in utero embryonic development"/>
    <property type="evidence" value="ECO:0007669"/>
    <property type="project" value="Ensembl"/>
</dbReference>
<dbReference type="GO" id="GO:0060563">
    <property type="term" value="P:neuroepithelial cell differentiation"/>
    <property type="evidence" value="ECO:0007669"/>
    <property type="project" value="Ensembl"/>
</dbReference>
<dbReference type="GO" id="GO:0032880">
    <property type="term" value="P:regulation of protein localization"/>
    <property type="evidence" value="ECO:0000318"/>
    <property type="project" value="GO_Central"/>
</dbReference>
<dbReference type="GO" id="GO:0007224">
    <property type="term" value="P:smoothened signaling pathway"/>
    <property type="evidence" value="ECO:0000250"/>
    <property type="project" value="UniProtKB"/>
</dbReference>
<dbReference type="GO" id="GO:0001944">
    <property type="term" value="P:vasculature development"/>
    <property type="evidence" value="ECO:0007669"/>
    <property type="project" value="Ensembl"/>
</dbReference>
<dbReference type="InterPro" id="IPR019306">
    <property type="entry name" value="TMEM231"/>
</dbReference>
<dbReference type="PANTHER" id="PTHR14605">
    <property type="entry name" value="CHST5 PROTEIN"/>
    <property type="match status" value="1"/>
</dbReference>
<dbReference type="PANTHER" id="PTHR14605:SF1">
    <property type="entry name" value="TRANSMEMBRANE PROTEIN 231"/>
    <property type="match status" value="1"/>
</dbReference>
<dbReference type="Pfam" id="PF10149">
    <property type="entry name" value="TM231"/>
    <property type="match status" value="1"/>
</dbReference>
<reference key="1">
    <citation type="journal article" date="2003" name="Genome Res.">
        <title>The secreted protein discovery initiative (SPDI), a large-scale effort to identify novel human secreted and transmembrane proteins: a bioinformatics assessment.</title>
        <authorList>
            <person name="Clark H.F."/>
            <person name="Gurney A.L."/>
            <person name="Abaya E."/>
            <person name="Baker K."/>
            <person name="Baldwin D.T."/>
            <person name="Brush J."/>
            <person name="Chen J."/>
            <person name="Chow B."/>
            <person name="Chui C."/>
            <person name="Crowley C."/>
            <person name="Currell B."/>
            <person name="Deuel B."/>
            <person name="Dowd P."/>
            <person name="Eaton D."/>
            <person name="Foster J.S."/>
            <person name="Grimaldi C."/>
            <person name="Gu Q."/>
            <person name="Hass P.E."/>
            <person name="Heldens S."/>
            <person name="Huang A."/>
            <person name="Kim H.S."/>
            <person name="Klimowski L."/>
            <person name="Jin Y."/>
            <person name="Johnson S."/>
            <person name="Lee J."/>
            <person name="Lewis L."/>
            <person name="Liao D."/>
            <person name="Mark M.R."/>
            <person name="Robbie E."/>
            <person name="Sanchez C."/>
            <person name="Schoenfeld J."/>
            <person name="Seshagiri S."/>
            <person name="Simmons L."/>
            <person name="Singh J."/>
            <person name="Smith V."/>
            <person name="Stinson J."/>
            <person name="Vagts A."/>
            <person name="Vandlen R.L."/>
            <person name="Watanabe C."/>
            <person name="Wieand D."/>
            <person name="Woods K."/>
            <person name="Xie M.-H."/>
            <person name="Yansura D.G."/>
            <person name="Yi S."/>
            <person name="Yu G."/>
            <person name="Yuan J."/>
            <person name="Zhang M."/>
            <person name="Zhang Z."/>
            <person name="Goddard A.D."/>
            <person name="Wood W.I."/>
            <person name="Godowski P.J."/>
            <person name="Gray A.M."/>
        </authorList>
    </citation>
    <scope>NUCLEOTIDE SEQUENCE [LARGE SCALE MRNA] (ISOFORM 1)</scope>
    <scope>VARIANT VAL-6</scope>
</reference>
<reference key="2">
    <citation type="journal article" date="2004" name="Nat. Genet.">
        <title>Complete sequencing and characterization of 21,243 full-length human cDNAs.</title>
        <authorList>
            <person name="Ota T."/>
            <person name="Suzuki Y."/>
            <person name="Nishikawa T."/>
            <person name="Otsuki T."/>
            <person name="Sugiyama T."/>
            <person name="Irie R."/>
            <person name="Wakamatsu A."/>
            <person name="Hayashi K."/>
            <person name="Sato H."/>
            <person name="Nagai K."/>
            <person name="Kimura K."/>
            <person name="Makita H."/>
            <person name="Sekine M."/>
            <person name="Obayashi M."/>
            <person name="Nishi T."/>
            <person name="Shibahara T."/>
            <person name="Tanaka T."/>
            <person name="Ishii S."/>
            <person name="Yamamoto J."/>
            <person name="Saito K."/>
            <person name="Kawai Y."/>
            <person name="Isono Y."/>
            <person name="Nakamura Y."/>
            <person name="Nagahari K."/>
            <person name="Murakami K."/>
            <person name="Yasuda T."/>
            <person name="Iwayanagi T."/>
            <person name="Wagatsuma M."/>
            <person name="Shiratori A."/>
            <person name="Sudo H."/>
            <person name="Hosoiri T."/>
            <person name="Kaku Y."/>
            <person name="Kodaira H."/>
            <person name="Kondo H."/>
            <person name="Sugawara M."/>
            <person name="Takahashi M."/>
            <person name="Kanda K."/>
            <person name="Yokoi T."/>
            <person name="Furuya T."/>
            <person name="Kikkawa E."/>
            <person name="Omura Y."/>
            <person name="Abe K."/>
            <person name="Kamihara K."/>
            <person name="Katsuta N."/>
            <person name="Sato K."/>
            <person name="Tanikawa M."/>
            <person name="Yamazaki M."/>
            <person name="Ninomiya K."/>
            <person name="Ishibashi T."/>
            <person name="Yamashita H."/>
            <person name="Murakawa K."/>
            <person name="Fujimori K."/>
            <person name="Tanai H."/>
            <person name="Kimata M."/>
            <person name="Watanabe M."/>
            <person name="Hiraoka S."/>
            <person name="Chiba Y."/>
            <person name="Ishida S."/>
            <person name="Ono Y."/>
            <person name="Takiguchi S."/>
            <person name="Watanabe S."/>
            <person name="Yosida M."/>
            <person name="Hotuta T."/>
            <person name="Kusano J."/>
            <person name="Kanehori K."/>
            <person name="Takahashi-Fujii A."/>
            <person name="Hara H."/>
            <person name="Tanase T.-O."/>
            <person name="Nomura Y."/>
            <person name="Togiya S."/>
            <person name="Komai F."/>
            <person name="Hara R."/>
            <person name="Takeuchi K."/>
            <person name="Arita M."/>
            <person name="Imose N."/>
            <person name="Musashino K."/>
            <person name="Yuuki H."/>
            <person name="Oshima A."/>
            <person name="Sasaki N."/>
            <person name="Aotsuka S."/>
            <person name="Yoshikawa Y."/>
            <person name="Matsunawa H."/>
            <person name="Ichihara T."/>
            <person name="Shiohata N."/>
            <person name="Sano S."/>
            <person name="Moriya S."/>
            <person name="Momiyama H."/>
            <person name="Satoh N."/>
            <person name="Takami S."/>
            <person name="Terashima Y."/>
            <person name="Suzuki O."/>
            <person name="Nakagawa S."/>
            <person name="Senoh A."/>
            <person name="Mizoguchi H."/>
            <person name="Goto Y."/>
            <person name="Shimizu F."/>
            <person name="Wakebe H."/>
            <person name="Hishigaki H."/>
            <person name="Watanabe T."/>
            <person name="Sugiyama A."/>
            <person name="Takemoto M."/>
            <person name="Kawakami B."/>
            <person name="Yamazaki M."/>
            <person name="Watanabe K."/>
            <person name="Kumagai A."/>
            <person name="Itakura S."/>
            <person name="Fukuzumi Y."/>
            <person name="Fujimori Y."/>
            <person name="Komiyama M."/>
            <person name="Tashiro H."/>
            <person name="Tanigami A."/>
            <person name="Fujiwara T."/>
            <person name="Ono T."/>
            <person name="Yamada K."/>
            <person name="Fujii Y."/>
            <person name="Ozaki K."/>
            <person name="Hirao M."/>
            <person name="Ohmori Y."/>
            <person name="Kawabata A."/>
            <person name="Hikiji T."/>
            <person name="Kobatake N."/>
            <person name="Inagaki H."/>
            <person name="Ikema Y."/>
            <person name="Okamoto S."/>
            <person name="Okitani R."/>
            <person name="Kawakami T."/>
            <person name="Noguchi S."/>
            <person name="Itoh T."/>
            <person name="Shigeta K."/>
            <person name="Senba T."/>
            <person name="Matsumura K."/>
            <person name="Nakajima Y."/>
            <person name="Mizuno T."/>
            <person name="Morinaga M."/>
            <person name="Sasaki M."/>
            <person name="Togashi T."/>
            <person name="Oyama M."/>
            <person name="Hata H."/>
            <person name="Watanabe M."/>
            <person name="Komatsu T."/>
            <person name="Mizushima-Sugano J."/>
            <person name="Satoh T."/>
            <person name="Shirai Y."/>
            <person name="Takahashi Y."/>
            <person name="Nakagawa K."/>
            <person name="Okumura K."/>
            <person name="Nagase T."/>
            <person name="Nomura N."/>
            <person name="Kikuchi H."/>
            <person name="Masuho Y."/>
            <person name="Yamashita R."/>
            <person name="Nakai K."/>
            <person name="Yada T."/>
            <person name="Nakamura Y."/>
            <person name="Ohara O."/>
            <person name="Isogai T."/>
            <person name="Sugano S."/>
        </authorList>
    </citation>
    <scope>NUCLEOTIDE SEQUENCE [LARGE SCALE MRNA] (ISOFORMS 1 AND 2)</scope>
    <scope>VARIANT VAL-6</scope>
    <source>
        <tissue>Brain</tissue>
    </source>
</reference>
<reference key="3">
    <citation type="journal article" date="2004" name="Nature">
        <title>The sequence and analysis of duplication-rich human chromosome 16.</title>
        <authorList>
            <person name="Martin J."/>
            <person name="Han C."/>
            <person name="Gordon L.A."/>
            <person name="Terry A."/>
            <person name="Prabhakar S."/>
            <person name="She X."/>
            <person name="Xie G."/>
            <person name="Hellsten U."/>
            <person name="Chan Y.M."/>
            <person name="Altherr M."/>
            <person name="Couronne O."/>
            <person name="Aerts A."/>
            <person name="Bajorek E."/>
            <person name="Black S."/>
            <person name="Blumer H."/>
            <person name="Branscomb E."/>
            <person name="Brown N.C."/>
            <person name="Bruno W.J."/>
            <person name="Buckingham J.M."/>
            <person name="Callen D.F."/>
            <person name="Campbell C.S."/>
            <person name="Campbell M.L."/>
            <person name="Campbell E.W."/>
            <person name="Caoile C."/>
            <person name="Challacombe J.F."/>
            <person name="Chasteen L.A."/>
            <person name="Chertkov O."/>
            <person name="Chi H.C."/>
            <person name="Christensen M."/>
            <person name="Clark L.M."/>
            <person name="Cohn J.D."/>
            <person name="Denys M."/>
            <person name="Detter J.C."/>
            <person name="Dickson M."/>
            <person name="Dimitrijevic-Bussod M."/>
            <person name="Escobar J."/>
            <person name="Fawcett J.J."/>
            <person name="Flowers D."/>
            <person name="Fotopulos D."/>
            <person name="Glavina T."/>
            <person name="Gomez M."/>
            <person name="Gonzales E."/>
            <person name="Goodstein D."/>
            <person name="Goodwin L.A."/>
            <person name="Grady D.L."/>
            <person name="Grigoriev I."/>
            <person name="Groza M."/>
            <person name="Hammon N."/>
            <person name="Hawkins T."/>
            <person name="Haydu L."/>
            <person name="Hildebrand C.E."/>
            <person name="Huang W."/>
            <person name="Israni S."/>
            <person name="Jett J."/>
            <person name="Jewett P.B."/>
            <person name="Kadner K."/>
            <person name="Kimball H."/>
            <person name="Kobayashi A."/>
            <person name="Krawczyk M.-C."/>
            <person name="Leyba T."/>
            <person name="Longmire J.L."/>
            <person name="Lopez F."/>
            <person name="Lou Y."/>
            <person name="Lowry S."/>
            <person name="Ludeman T."/>
            <person name="Manohar C.F."/>
            <person name="Mark G.A."/>
            <person name="McMurray K.L."/>
            <person name="Meincke L.J."/>
            <person name="Morgan J."/>
            <person name="Moyzis R.K."/>
            <person name="Mundt M.O."/>
            <person name="Munk A.C."/>
            <person name="Nandkeshwar R.D."/>
            <person name="Pitluck S."/>
            <person name="Pollard M."/>
            <person name="Predki P."/>
            <person name="Parson-Quintana B."/>
            <person name="Ramirez L."/>
            <person name="Rash S."/>
            <person name="Retterer J."/>
            <person name="Ricke D.O."/>
            <person name="Robinson D.L."/>
            <person name="Rodriguez A."/>
            <person name="Salamov A."/>
            <person name="Saunders E.H."/>
            <person name="Scott D."/>
            <person name="Shough T."/>
            <person name="Stallings R.L."/>
            <person name="Stalvey M."/>
            <person name="Sutherland R.D."/>
            <person name="Tapia R."/>
            <person name="Tesmer J.G."/>
            <person name="Thayer N."/>
            <person name="Thompson L.S."/>
            <person name="Tice H."/>
            <person name="Torney D.C."/>
            <person name="Tran-Gyamfi M."/>
            <person name="Tsai M."/>
            <person name="Ulanovsky L.E."/>
            <person name="Ustaszewska A."/>
            <person name="Vo N."/>
            <person name="White P.S."/>
            <person name="Williams A.L."/>
            <person name="Wills P.L."/>
            <person name="Wu J.-R."/>
            <person name="Wu K."/>
            <person name="Yang J."/>
            <person name="DeJong P."/>
            <person name="Bruce D."/>
            <person name="Doggett N.A."/>
            <person name="Deaven L."/>
            <person name="Schmutz J."/>
            <person name="Grimwood J."/>
            <person name="Richardson P."/>
            <person name="Rokhsar D.S."/>
            <person name="Eichler E.E."/>
            <person name="Gilna P."/>
            <person name="Lucas S.M."/>
            <person name="Myers R.M."/>
            <person name="Rubin E.M."/>
            <person name="Pennacchio L.A."/>
        </authorList>
    </citation>
    <scope>NUCLEOTIDE SEQUENCE [LARGE SCALE GENOMIC DNA]</scope>
</reference>
<reference key="4">
    <citation type="submission" date="2005-09" db="EMBL/GenBank/DDBJ databases">
        <authorList>
            <person name="Mural R.J."/>
            <person name="Istrail S."/>
            <person name="Sutton G.G."/>
            <person name="Florea L."/>
            <person name="Halpern A.L."/>
            <person name="Mobarry C.M."/>
            <person name="Lippert R."/>
            <person name="Walenz B."/>
            <person name="Shatkay H."/>
            <person name="Dew I."/>
            <person name="Miller J.R."/>
            <person name="Flanigan M.J."/>
            <person name="Edwards N.J."/>
            <person name="Bolanos R."/>
            <person name="Fasulo D."/>
            <person name="Halldorsson B.V."/>
            <person name="Hannenhalli S."/>
            <person name="Turner R."/>
            <person name="Yooseph S."/>
            <person name="Lu F."/>
            <person name="Nusskern D.R."/>
            <person name="Shue B.C."/>
            <person name="Zheng X.H."/>
            <person name="Zhong F."/>
            <person name="Delcher A.L."/>
            <person name="Huson D.H."/>
            <person name="Kravitz S.A."/>
            <person name="Mouchard L."/>
            <person name="Reinert K."/>
            <person name="Remington K.A."/>
            <person name="Clark A.G."/>
            <person name="Waterman M.S."/>
            <person name="Eichler E.E."/>
            <person name="Adams M.D."/>
            <person name="Hunkapiller M.W."/>
            <person name="Myers E.W."/>
            <person name="Venter J.C."/>
        </authorList>
    </citation>
    <scope>NUCLEOTIDE SEQUENCE [LARGE SCALE GENOMIC DNA]</scope>
</reference>
<reference key="5">
    <citation type="journal article" date="2004" name="Genome Res.">
        <title>The status, quality, and expansion of the NIH full-length cDNA project: the Mammalian Gene Collection (MGC).</title>
        <authorList>
            <consortium name="The MGC Project Team"/>
        </authorList>
    </citation>
    <scope>NUCLEOTIDE SEQUENCE [LARGE SCALE MRNA] (ISOFORMS 1 AND 3)</scope>
    <source>
        <tissue>Brain</tissue>
        <tissue>Lymph</tissue>
        <tissue>Ovary</tissue>
    </source>
</reference>
<reference key="6">
    <citation type="journal article" date="2016" name="Nat. Cell Biol.">
        <title>TMEM107 recruits ciliopathy proteins to subdomains of the ciliary transition zone and causes Joubert syndrome.</title>
        <authorList>
            <person name="Lambacher N.J."/>
            <person name="Bruel A.L."/>
            <person name="van Dam T.J."/>
            <person name="Szymanska K."/>
            <person name="Slaats G.G."/>
            <person name="Kuhns S."/>
            <person name="McManus G.J."/>
            <person name="Kennedy J.E."/>
            <person name="Gaff K."/>
            <person name="Wu K.M."/>
            <person name="van der Lee R."/>
            <person name="Burglen L."/>
            <person name="Doummar D."/>
            <person name="Riviere J.B."/>
            <person name="Faivre L."/>
            <person name="Attie-Bitach T."/>
            <person name="Saunier S."/>
            <person name="Curd A."/>
            <person name="Peckham M."/>
            <person name="Giles R.H."/>
            <person name="Johnson C.A."/>
            <person name="Huynen M.A."/>
            <person name="Thauvin-Robinet C."/>
            <person name="Blacque O.E."/>
        </authorList>
    </citation>
    <scope>IDENTIFICATION IN THE TECTONIC-LIKE COMPLEX</scope>
    <scope>INTERACTION WITH TMEM107</scope>
</reference>
<reference key="7">
    <citation type="journal article" date="2012" name="J. Med. Genet.">
        <title>Mutations in TMEM231 cause Joubert syndrome in French Canadians.</title>
        <authorList>
            <consortium name="FORGE Canada Consortium"/>
            <person name="Srour M."/>
            <person name="Hamdan F.F."/>
            <person name="Schwartzentruber J.A."/>
            <person name="Patry L."/>
            <person name="Ospina L.H."/>
            <person name="Shevell M.I."/>
            <person name="Desilets V."/>
            <person name="Dobrzeniecka S."/>
            <person name="Mathonnet G."/>
            <person name="Lemyre E."/>
            <person name="Massicotte C."/>
            <person name="Labuda D."/>
            <person name="Amrom D."/>
            <person name="Andermann E."/>
            <person name="Sebire G."/>
            <person name="Maranda B."/>
            <person name="Rouleau G.A."/>
            <person name="Majewski J."/>
            <person name="Michaud J.L."/>
        </authorList>
    </citation>
    <scope>VARIANT JBTS20 ASN-209</scope>
</reference>
<reference key="8">
    <citation type="journal article" date="2013" name="J. Med. Genet.">
        <title>Mutations in TMEM231 cause Meckel-Gruber syndrome.</title>
        <authorList>
            <person name="Shaheen R."/>
            <person name="Ansari S."/>
            <person name="Mardawi E.A."/>
            <person name="Alshammari M.J."/>
            <person name="Alkuraya F.S."/>
        </authorList>
    </citation>
    <scope>VARIANT MKS11 PRO-272</scope>
</reference>
<reference key="9">
    <citation type="journal article" date="2015" name="Am. J. Hum. Genet.">
        <title>Joubert Syndrome in French Canadians and Identification of Mutations in CEP104.</title>
        <authorList>
            <consortium name="Care4Rare Canada Consortium"/>
            <person name="Srour M."/>
            <person name="Hamdan F.F."/>
            <person name="McKnight D."/>
            <person name="Davis E."/>
            <person name="Mandel H."/>
            <person name="Schwartzentruber J."/>
            <person name="Martin B."/>
            <person name="Patry L."/>
            <person name="Nassif C."/>
            <person name="Dionne-Laporte A."/>
            <person name="Ospina L.H."/>
            <person name="Lemyre E."/>
            <person name="Massicotte C."/>
            <person name="Laframboise R."/>
            <person name="Maranda B."/>
            <person name="Labuda D."/>
            <person name="Decarie J.C."/>
            <person name="Rypens F."/>
            <person name="Goldsher D."/>
            <person name="Fallet-Bianco C."/>
            <person name="Soucy J.F."/>
            <person name="Laberge A.M."/>
            <person name="Maftei C."/>
            <person name="Boycott K."/>
            <person name="Brais B."/>
            <person name="Boucher R.M."/>
            <person name="Rouleau G.A."/>
            <person name="Katsanis N."/>
            <person name="Majewski J."/>
            <person name="Elpeleg O."/>
            <person name="Kukolich M.K."/>
            <person name="Shalev S."/>
            <person name="Michaud J.L."/>
        </authorList>
    </citation>
    <scope>VARIANT JBTS20 ASN-209</scope>
</reference>
<evidence type="ECO:0000250" key="1"/>
<evidence type="ECO:0000255" key="2"/>
<evidence type="ECO:0000269" key="3">
    <source>
    </source>
</evidence>
<evidence type="ECO:0000269" key="4">
    <source>
    </source>
</evidence>
<evidence type="ECO:0000269" key="5">
    <source>
    </source>
</evidence>
<evidence type="ECO:0000269" key="6">
    <source>
    </source>
</evidence>
<evidence type="ECO:0000269" key="7">
    <source>
    </source>
</evidence>
<evidence type="ECO:0000269" key="8">
    <source>
    </source>
</evidence>
<evidence type="ECO:0000303" key="9">
    <source>
    </source>
</evidence>
<evidence type="ECO:0000303" key="10">
    <source>
    </source>
</evidence>
<evidence type="ECO:0000305" key="11"/>
<keyword id="KW-0025">Alternative splicing</keyword>
<keyword id="KW-1003">Cell membrane</keyword>
<keyword id="KW-0966">Cell projection</keyword>
<keyword id="KW-1186">Ciliopathy</keyword>
<keyword id="KW-0969">Cilium</keyword>
<keyword id="KW-0970">Cilium biogenesis/degradation</keyword>
<keyword id="KW-0225">Disease variant</keyword>
<keyword id="KW-0325">Glycoprotein</keyword>
<keyword id="KW-0979">Joubert syndrome</keyword>
<keyword id="KW-0981">Meckel syndrome</keyword>
<keyword id="KW-0472">Membrane</keyword>
<keyword id="KW-1267">Proteomics identification</keyword>
<keyword id="KW-1185">Reference proteome</keyword>
<keyword id="KW-0812">Transmembrane</keyword>
<keyword id="KW-1133">Transmembrane helix</keyword>
<name>TM231_HUMAN</name>
<gene>
    <name type="primary">TMEM231</name>
    <name type="ORF">UNQ870/PRO1886</name>
</gene>
<feature type="chain" id="PRO_0000317520" description="Transmembrane protein 231">
    <location>
        <begin position="1"/>
        <end position="316"/>
    </location>
</feature>
<feature type="transmembrane region" description="Helical" evidence="2">
    <location>
        <begin position="23"/>
        <end position="43"/>
    </location>
</feature>
<feature type="transmembrane region" description="Helical" evidence="2">
    <location>
        <begin position="262"/>
        <end position="282"/>
    </location>
</feature>
<feature type="glycosylation site" description="N-linked (GlcNAc...) asparagine" evidence="2">
    <location>
        <position position="194"/>
    </location>
</feature>
<feature type="glycosylation site" description="N-linked (GlcNAc...) asparagine" evidence="2">
    <location>
        <position position="199"/>
    </location>
</feature>
<feature type="glycosylation site" description="N-linked (GlcNAc...) asparagine" evidence="2">
    <location>
        <position position="221"/>
    </location>
</feature>
<feature type="splice variant" id="VSP_042387" description="In isoform 3." evidence="10">
    <location>
        <begin position="1"/>
        <end position="116"/>
    </location>
</feature>
<feature type="splice variant" id="VSP_042388" description="In isoform 2." evidence="9">
    <original>MALYELFSHPVERSYRAGLCSKAALFLLLAAALTYIPPLLVAFRSH</original>
    <variation>MSSSLTRSSAVTARGSAPKPRCSCCWPLRSRTSRRCWWPSGATVSLPRPLCHEAPRARSARAGLPNRLPTALFNS</variation>
    <location>
        <begin position="1"/>
        <end position="46"/>
    </location>
</feature>
<feature type="sequence variant" id="VAR_038543" description="In dbSNP:rs3743601." evidence="3 4">
    <original>L</original>
    <variation>V</variation>
    <location>
        <position position="6"/>
    </location>
</feature>
<feature type="sequence variant" id="VAR_069044" description="In JBTS20; dbSNP:rs200799769." evidence="5 7">
    <original>D</original>
    <variation>N</variation>
    <location>
        <position position="209"/>
    </location>
</feature>
<feature type="sequence variant" id="VAR_070456" description="In MKS11; dbSNP:rs397514754." evidence="6">
    <original>Q</original>
    <variation>P</variation>
    <location>
        <position position="272"/>
    </location>
</feature>
<feature type="sequence conflict" description="In Ref. 5; AAH63677." evidence="11" ref="5">
    <original>P</original>
    <variation>S</variation>
    <location>
        <position position="125"/>
    </location>
</feature>
<feature type="sequence conflict" description="In Ref. 2; BAG53347." evidence="11" ref="2">
    <original>S</original>
    <variation>R</variation>
    <location sequence="Q9H6L2-2">
        <position position="2"/>
    </location>
</feature>